<evidence type="ECO:0000250" key="1"/>
<evidence type="ECO:0000250" key="2">
    <source>
        <dbReference type="UniProtKB" id="Q9BQK8"/>
    </source>
</evidence>
<evidence type="ECO:0000255" key="3"/>
<evidence type="ECO:0000256" key="4">
    <source>
        <dbReference type="SAM" id="MobiDB-lite"/>
    </source>
</evidence>
<evidence type="ECO:0000269" key="5">
    <source>
    </source>
</evidence>
<evidence type="ECO:0000305" key="6"/>
<evidence type="ECO:0000312" key="7">
    <source>
        <dbReference type="MGI" id="MGI:1891342"/>
    </source>
</evidence>
<evidence type="ECO:0007744" key="8">
    <source>
    </source>
</evidence>
<sequence length="848" mass="94316">MNYVGQLAETVFGTVKELYRGLNPATLSGGIDVLVVRQRDGSFRCSPFHVRFGKLGVLRSREKVVDIEINGEPVDLHMKLGDSGEAFFVQELDSDEEDVPPRLCTSPIPWGGLSGFPSDSQIGTASEPEGLVITGRRKRRRRRKPRRREEDAVDSSSEELEAGAESELTLLEKPTPESPSAQEAEEPSSQPKDIHPYSDGECTPQANLSSGDLMSPKSDSELELRSLEPSPLRAESHMQWVWGRLPKVAKAERPEFSLILESMAEAICALPEEPSPSSSPSEAGVDTLSPPVLHPGVRADTFHPAVEAHCEETAVDSPLAAPESKETKTQNSRGAGHPPATKSWSWTTPESHTPSGHPQVSRGKGSLKRNQHLGPSDIYLDDLPSLDSENVALYFPKSEYGMGARRWSEPSNQKLLESPNPEHIAECTLDSVDKIELSLCGGLADNRDISLEKFTQHMVSYEDLTKNPGLLDDPNLVVKINEKHYNWAVAAPMILSLQAFQKNLPESTVDKLEKEKMPRKGGRWWFSWRRRDFPAEEHSSQREKAATRKQQGEKTEVLSSDDDVPDSPVILEVPPLPSSTPGYVPTYKKSLRLSSDQIRCLNLNEGANDVVFSVTTQYQGTCRCKATIYLWNWDDKVVISDIDGTITKSDALGHILPQLGKDWTHQGITSLYHKIHLNGYKFLYCSARAIGMADLTKGYLQWVSEHGCGLPKGPILLSPSSLFSALHREVIEKKPEVFKVACLSDIQQLFLPQRQPFHAAFGNRPNDVFAYRQVGLPESRIFTVNPRGELIQELIKSHKSTYQRLGEVVELLFPPVVRGPSTDLASPEYSNLSYWRKPLPYVDFEALA</sequence>
<feature type="chain" id="PRO_0000209884" description="Phosphatidate phosphatase LPIN3">
    <location>
        <begin position="1"/>
        <end position="848"/>
    </location>
</feature>
<feature type="region of interest" description="N-LIP" evidence="1">
    <location>
        <begin position="1"/>
        <end position="108"/>
    </location>
</feature>
<feature type="region of interest" description="Disordered" evidence="4">
    <location>
        <begin position="97"/>
        <end position="233"/>
    </location>
</feature>
<feature type="region of interest" description="Disordered" evidence="4">
    <location>
        <begin position="271"/>
        <end position="298"/>
    </location>
</feature>
<feature type="region of interest" description="Disordered" evidence="4">
    <location>
        <begin position="314"/>
        <end position="373"/>
    </location>
</feature>
<feature type="region of interest" description="Disordered" evidence="4">
    <location>
        <begin position="536"/>
        <end position="568"/>
    </location>
</feature>
<feature type="region of interest" description="C-LIP" evidence="1">
    <location>
        <begin position="587"/>
        <end position="789"/>
    </location>
</feature>
<feature type="short sequence motif" description="Nuclear localization signal" evidence="3">
    <location>
        <begin position="135"/>
        <end position="144"/>
    </location>
</feature>
<feature type="short sequence motif" description="DXDXT motif">
    <location>
        <begin position="641"/>
        <end position="645"/>
    </location>
</feature>
<feature type="short sequence motif" description="LXXIL motif">
    <location>
        <begin position="652"/>
        <end position="656"/>
    </location>
</feature>
<feature type="compositionally biased region" description="Basic residues" evidence="4">
    <location>
        <begin position="135"/>
        <end position="146"/>
    </location>
</feature>
<feature type="compositionally biased region" description="Acidic residues" evidence="4">
    <location>
        <begin position="151"/>
        <end position="164"/>
    </location>
</feature>
<feature type="compositionally biased region" description="Low complexity" evidence="4">
    <location>
        <begin position="165"/>
        <end position="191"/>
    </location>
</feature>
<feature type="compositionally biased region" description="Low complexity" evidence="4">
    <location>
        <begin position="271"/>
        <end position="282"/>
    </location>
</feature>
<feature type="compositionally biased region" description="Polar residues" evidence="4">
    <location>
        <begin position="342"/>
        <end position="358"/>
    </location>
</feature>
<feature type="compositionally biased region" description="Basic and acidic residues" evidence="4">
    <location>
        <begin position="536"/>
        <end position="556"/>
    </location>
</feature>
<feature type="modified residue" description="Phosphoserine" evidence="2">
    <location>
        <position position="155"/>
    </location>
</feature>
<feature type="modified residue" description="Phosphoserine" evidence="2">
    <location>
        <position position="156"/>
    </location>
</feature>
<feature type="modified residue" description="Phosphoserine" evidence="8">
    <location>
        <position position="218"/>
    </location>
</feature>
<feature type="modified residue" description="Phosphoserine" evidence="2">
    <location>
        <position position="460"/>
    </location>
</feature>
<feature type="sequence conflict" description="In Ref. 2; BAC33710." evidence="6" ref="2">
    <original>S</original>
    <variation>G</variation>
    <location>
        <position position="833"/>
    </location>
</feature>
<dbReference type="EC" id="3.1.3.4" evidence="5"/>
<dbReference type="EMBL" id="AF286724">
    <property type="protein sequence ID" value="AAG52762.1"/>
    <property type="molecule type" value="mRNA"/>
</dbReference>
<dbReference type="EMBL" id="AK049363">
    <property type="protein sequence ID" value="BAC33710.1"/>
    <property type="molecule type" value="mRNA"/>
</dbReference>
<dbReference type="EMBL" id="AK163833">
    <property type="protein sequence ID" value="BAE37510.1"/>
    <property type="molecule type" value="mRNA"/>
</dbReference>
<dbReference type="CCDS" id="CCDS16998.1"/>
<dbReference type="RefSeq" id="NP_001186047.1">
    <property type="nucleotide sequence ID" value="NM_001199118.2"/>
</dbReference>
<dbReference type="RefSeq" id="NP_075021.1">
    <property type="nucleotide sequence ID" value="NM_022883.4"/>
</dbReference>
<dbReference type="SMR" id="Q99PI4"/>
<dbReference type="BioGRID" id="211111">
    <property type="interactions" value="1"/>
</dbReference>
<dbReference type="FunCoup" id="Q99PI4">
    <property type="interactions" value="1434"/>
</dbReference>
<dbReference type="STRING" id="10090.ENSMUSP00000105082"/>
<dbReference type="SwissLipids" id="SLP:000000603"/>
<dbReference type="GlyGen" id="Q99PI4">
    <property type="glycosylation" value="1 site"/>
</dbReference>
<dbReference type="iPTMnet" id="Q99PI4"/>
<dbReference type="PhosphoSitePlus" id="Q99PI4"/>
<dbReference type="PaxDb" id="10090-ENSMUSP00000105082"/>
<dbReference type="ProteomicsDB" id="290144"/>
<dbReference type="Antibodypedia" id="27036">
    <property type="antibodies" value="167 antibodies from 25 providers"/>
</dbReference>
<dbReference type="DNASU" id="64899"/>
<dbReference type="Ensembl" id="ENSMUST00000040872.13">
    <property type="protein sequence ID" value="ENSMUSP00000043053.7"/>
    <property type="gene ID" value="ENSMUSG00000027412.13"/>
</dbReference>
<dbReference type="Ensembl" id="ENSMUST00000109456.9">
    <property type="protein sequence ID" value="ENSMUSP00000105082.3"/>
    <property type="gene ID" value="ENSMUSG00000027412.13"/>
</dbReference>
<dbReference type="GeneID" id="64899"/>
<dbReference type="KEGG" id="mmu:64899"/>
<dbReference type="UCSC" id="uc008nrh.2">
    <property type="organism name" value="mouse"/>
</dbReference>
<dbReference type="AGR" id="MGI:1891342"/>
<dbReference type="CTD" id="64900"/>
<dbReference type="MGI" id="MGI:1891342">
    <property type="gene designation" value="Lpin3"/>
</dbReference>
<dbReference type="VEuPathDB" id="HostDB:ENSMUSG00000027412"/>
<dbReference type="eggNOG" id="KOG2116">
    <property type="taxonomic scope" value="Eukaryota"/>
</dbReference>
<dbReference type="GeneTree" id="ENSGT00940000160046"/>
<dbReference type="HOGENOM" id="CLU_002546_0_1_1"/>
<dbReference type="InParanoid" id="Q99PI4"/>
<dbReference type="OMA" id="GSRWWFS"/>
<dbReference type="OrthoDB" id="67013at9989"/>
<dbReference type="TreeFam" id="TF314095"/>
<dbReference type="Reactome" id="R-MMU-1483191">
    <property type="pathway name" value="Synthesis of PC"/>
</dbReference>
<dbReference type="Reactome" id="R-MMU-1483213">
    <property type="pathway name" value="Synthesis of PE"/>
</dbReference>
<dbReference type="Reactome" id="R-MMU-4419969">
    <property type="pathway name" value="Depolymerization of the Nuclear Lamina"/>
</dbReference>
<dbReference type="Reactome" id="R-MMU-75109">
    <property type="pathway name" value="Triglyceride biosynthesis"/>
</dbReference>
<dbReference type="BioGRID-ORCS" id="64899">
    <property type="hits" value="2 hits in 81 CRISPR screens"/>
</dbReference>
<dbReference type="PRO" id="PR:Q99PI4"/>
<dbReference type="Proteomes" id="UP000000589">
    <property type="component" value="Chromosome 2"/>
</dbReference>
<dbReference type="RNAct" id="Q99PI4">
    <property type="molecule type" value="protein"/>
</dbReference>
<dbReference type="Bgee" id="ENSMUSG00000027412">
    <property type="expression patterns" value="Expressed in dorsal pancreas and 80 other cell types or tissues"/>
</dbReference>
<dbReference type="ExpressionAtlas" id="Q99PI4">
    <property type="expression patterns" value="baseline and differential"/>
</dbReference>
<dbReference type="GO" id="GO:0005634">
    <property type="term" value="C:nucleus"/>
    <property type="evidence" value="ECO:0000247"/>
    <property type="project" value="MGI"/>
</dbReference>
<dbReference type="GO" id="GO:0008195">
    <property type="term" value="F:phosphatidate phosphatase activity"/>
    <property type="evidence" value="ECO:0000314"/>
    <property type="project" value="MGI"/>
</dbReference>
<dbReference type="GO" id="GO:0006631">
    <property type="term" value="P:fatty acid metabolic process"/>
    <property type="evidence" value="ECO:0007669"/>
    <property type="project" value="UniProtKB-KW"/>
</dbReference>
<dbReference type="Gene3D" id="3.40.50.1000">
    <property type="entry name" value="HAD superfamily/HAD-like"/>
    <property type="match status" value="1"/>
</dbReference>
<dbReference type="InterPro" id="IPR036412">
    <property type="entry name" value="HAD-like_sf"/>
</dbReference>
<dbReference type="InterPro" id="IPR023214">
    <property type="entry name" value="HAD_sf"/>
</dbReference>
<dbReference type="InterPro" id="IPR026058">
    <property type="entry name" value="LIPIN"/>
</dbReference>
<dbReference type="InterPro" id="IPR031703">
    <property type="entry name" value="Lipin_mid"/>
</dbReference>
<dbReference type="InterPro" id="IPR007651">
    <property type="entry name" value="Lipin_N"/>
</dbReference>
<dbReference type="InterPro" id="IPR013209">
    <property type="entry name" value="LNS2"/>
</dbReference>
<dbReference type="InterPro" id="IPR031315">
    <property type="entry name" value="LNS2/PITP"/>
</dbReference>
<dbReference type="PANTHER" id="PTHR12181">
    <property type="entry name" value="LIPIN"/>
    <property type="match status" value="1"/>
</dbReference>
<dbReference type="PANTHER" id="PTHR12181:SF62">
    <property type="entry name" value="PHOSPHATIDATE PHOSPHATASE LPIN3"/>
    <property type="match status" value="1"/>
</dbReference>
<dbReference type="Pfam" id="PF16876">
    <property type="entry name" value="Lipin_mid"/>
    <property type="match status" value="1"/>
</dbReference>
<dbReference type="Pfam" id="PF04571">
    <property type="entry name" value="Lipin_N"/>
    <property type="match status" value="1"/>
</dbReference>
<dbReference type="Pfam" id="PF08235">
    <property type="entry name" value="LNS2"/>
    <property type="match status" value="1"/>
</dbReference>
<dbReference type="SMART" id="SM00775">
    <property type="entry name" value="LNS2"/>
    <property type="match status" value="1"/>
</dbReference>
<dbReference type="SUPFAM" id="SSF56784">
    <property type="entry name" value="HAD-like"/>
    <property type="match status" value="1"/>
</dbReference>
<organism>
    <name type="scientific">Mus musculus</name>
    <name type="common">Mouse</name>
    <dbReference type="NCBI Taxonomy" id="10090"/>
    <lineage>
        <taxon>Eukaryota</taxon>
        <taxon>Metazoa</taxon>
        <taxon>Chordata</taxon>
        <taxon>Craniata</taxon>
        <taxon>Vertebrata</taxon>
        <taxon>Euteleostomi</taxon>
        <taxon>Mammalia</taxon>
        <taxon>Eutheria</taxon>
        <taxon>Euarchontoglires</taxon>
        <taxon>Glires</taxon>
        <taxon>Rodentia</taxon>
        <taxon>Myomorpha</taxon>
        <taxon>Muroidea</taxon>
        <taxon>Muridae</taxon>
        <taxon>Murinae</taxon>
        <taxon>Mus</taxon>
        <taxon>Mus</taxon>
    </lineage>
</organism>
<proteinExistence type="evidence at protein level"/>
<gene>
    <name evidence="7" type="primary">Lpin3</name>
</gene>
<name>LPIN3_MOUSE</name>
<accession>Q99PI4</accession>
<accession>Q3TQ75</accession>
<accession>Q8C7R9</accession>
<keyword id="KW-0276">Fatty acid metabolism</keyword>
<keyword id="KW-0378">Hydrolase</keyword>
<keyword id="KW-0443">Lipid metabolism</keyword>
<keyword id="KW-0539">Nucleus</keyword>
<keyword id="KW-0597">Phosphoprotein</keyword>
<keyword id="KW-1185">Reference proteome</keyword>
<reference key="1">
    <citation type="journal article" date="2001" name="Nat. Genet.">
        <title>Lipodystrophy in the fld mouse results from mutation of a new gene encoding a nuclear protein, lipin.</title>
        <authorList>
            <person name="Peterfy M."/>
            <person name="Phan J."/>
            <person name="Xu P."/>
            <person name="Reue K."/>
        </authorList>
    </citation>
    <scope>NUCLEOTIDE SEQUENCE [MRNA]</scope>
</reference>
<reference key="2">
    <citation type="journal article" date="2005" name="Science">
        <title>The transcriptional landscape of the mammalian genome.</title>
        <authorList>
            <person name="Carninci P."/>
            <person name="Kasukawa T."/>
            <person name="Katayama S."/>
            <person name="Gough J."/>
            <person name="Frith M.C."/>
            <person name="Maeda N."/>
            <person name="Oyama R."/>
            <person name="Ravasi T."/>
            <person name="Lenhard B."/>
            <person name="Wells C."/>
            <person name="Kodzius R."/>
            <person name="Shimokawa K."/>
            <person name="Bajic V.B."/>
            <person name="Brenner S.E."/>
            <person name="Batalov S."/>
            <person name="Forrest A.R."/>
            <person name="Zavolan M."/>
            <person name="Davis M.J."/>
            <person name="Wilming L.G."/>
            <person name="Aidinis V."/>
            <person name="Allen J.E."/>
            <person name="Ambesi-Impiombato A."/>
            <person name="Apweiler R."/>
            <person name="Aturaliya R.N."/>
            <person name="Bailey T.L."/>
            <person name="Bansal M."/>
            <person name="Baxter L."/>
            <person name="Beisel K.W."/>
            <person name="Bersano T."/>
            <person name="Bono H."/>
            <person name="Chalk A.M."/>
            <person name="Chiu K.P."/>
            <person name="Choudhary V."/>
            <person name="Christoffels A."/>
            <person name="Clutterbuck D.R."/>
            <person name="Crowe M.L."/>
            <person name="Dalla E."/>
            <person name="Dalrymple B.P."/>
            <person name="de Bono B."/>
            <person name="Della Gatta G."/>
            <person name="di Bernardo D."/>
            <person name="Down T."/>
            <person name="Engstrom P."/>
            <person name="Fagiolini M."/>
            <person name="Faulkner G."/>
            <person name="Fletcher C.F."/>
            <person name="Fukushima T."/>
            <person name="Furuno M."/>
            <person name="Futaki S."/>
            <person name="Gariboldi M."/>
            <person name="Georgii-Hemming P."/>
            <person name="Gingeras T.R."/>
            <person name="Gojobori T."/>
            <person name="Green R.E."/>
            <person name="Gustincich S."/>
            <person name="Harbers M."/>
            <person name="Hayashi Y."/>
            <person name="Hensch T.K."/>
            <person name="Hirokawa N."/>
            <person name="Hill D."/>
            <person name="Huminiecki L."/>
            <person name="Iacono M."/>
            <person name="Ikeo K."/>
            <person name="Iwama A."/>
            <person name="Ishikawa T."/>
            <person name="Jakt M."/>
            <person name="Kanapin A."/>
            <person name="Katoh M."/>
            <person name="Kawasawa Y."/>
            <person name="Kelso J."/>
            <person name="Kitamura H."/>
            <person name="Kitano H."/>
            <person name="Kollias G."/>
            <person name="Krishnan S.P."/>
            <person name="Kruger A."/>
            <person name="Kummerfeld S.K."/>
            <person name="Kurochkin I.V."/>
            <person name="Lareau L.F."/>
            <person name="Lazarevic D."/>
            <person name="Lipovich L."/>
            <person name="Liu J."/>
            <person name="Liuni S."/>
            <person name="McWilliam S."/>
            <person name="Madan Babu M."/>
            <person name="Madera M."/>
            <person name="Marchionni L."/>
            <person name="Matsuda H."/>
            <person name="Matsuzawa S."/>
            <person name="Miki H."/>
            <person name="Mignone F."/>
            <person name="Miyake S."/>
            <person name="Morris K."/>
            <person name="Mottagui-Tabar S."/>
            <person name="Mulder N."/>
            <person name="Nakano N."/>
            <person name="Nakauchi H."/>
            <person name="Ng P."/>
            <person name="Nilsson R."/>
            <person name="Nishiguchi S."/>
            <person name="Nishikawa S."/>
            <person name="Nori F."/>
            <person name="Ohara O."/>
            <person name="Okazaki Y."/>
            <person name="Orlando V."/>
            <person name="Pang K.C."/>
            <person name="Pavan W.J."/>
            <person name="Pavesi G."/>
            <person name="Pesole G."/>
            <person name="Petrovsky N."/>
            <person name="Piazza S."/>
            <person name="Reed J."/>
            <person name="Reid J.F."/>
            <person name="Ring B.Z."/>
            <person name="Ringwald M."/>
            <person name="Rost B."/>
            <person name="Ruan Y."/>
            <person name="Salzberg S.L."/>
            <person name="Sandelin A."/>
            <person name="Schneider C."/>
            <person name="Schoenbach C."/>
            <person name="Sekiguchi K."/>
            <person name="Semple C.A."/>
            <person name="Seno S."/>
            <person name="Sessa L."/>
            <person name="Sheng Y."/>
            <person name="Shibata Y."/>
            <person name="Shimada H."/>
            <person name="Shimada K."/>
            <person name="Silva D."/>
            <person name="Sinclair B."/>
            <person name="Sperling S."/>
            <person name="Stupka E."/>
            <person name="Sugiura K."/>
            <person name="Sultana R."/>
            <person name="Takenaka Y."/>
            <person name="Taki K."/>
            <person name="Tammoja K."/>
            <person name="Tan S.L."/>
            <person name="Tang S."/>
            <person name="Taylor M.S."/>
            <person name="Tegner J."/>
            <person name="Teichmann S.A."/>
            <person name="Ueda H.R."/>
            <person name="van Nimwegen E."/>
            <person name="Verardo R."/>
            <person name="Wei C.L."/>
            <person name="Yagi K."/>
            <person name="Yamanishi H."/>
            <person name="Zabarovsky E."/>
            <person name="Zhu S."/>
            <person name="Zimmer A."/>
            <person name="Hide W."/>
            <person name="Bult C."/>
            <person name="Grimmond S.M."/>
            <person name="Teasdale R.D."/>
            <person name="Liu E.T."/>
            <person name="Brusic V."/>
            <person name="Quackenbush J."/>
            <person name="Wahlestedt C."/>
            <person name="Mattick J.S."/>
            <person name="Hume D.A."/>
            <person name="Kai C."/>
            <person name="Sasaki D."/>
            <person name="Tomaru Y."/>
            <person name="Fukuda S."/>
            <person name="Kanamori-Katayama M."/>
            <person name="Suzuki M."/>
            <person name="Aoki J."/>
            <person name="Arakawa T."/>
            <person name="Iida J."/>
            <person name="Imamura K."/>
            <person name="Itoh M."/>
            <person name="Kato T."/>
            <person name="Kawaji H."/>
            <person name="Kawagashira N."/>
            <person name="Kawashima T."/>
            <person name="Kojima M."/>
            <person name="Kondo S."/>
            <person name="Konno H."/>
            <person name="Nakano K."/>
            <person name="Ninomiya N."/>
            <person name="Nishio T."/>
            <person name="Okada M."/>
            <person name="Plessy C."/>
            <person name="Shibata K."/>
            <person name="Shiraki T."/>
            <person name="Suzuki S."/>
            <person name="Tagami M."/>
            <person name="Waki K."/>
            <person name="Watahiki A."/>
            <person name="Okamura-Oho Y."/>
            <person name="Suzuki H."/>
            <person name="Kawai J."/>
            <person name="Hayashizaki Y."/>
        </authorList>
    </citation>
    <scope>NUCLEOTIDE SEQUENCE [LARGE SCALE MRNA]</scope>
    <source>
        <strain>C57BL/6J</strain>
        <tissue>Head</tissue>
    </source>
</reference>
<reference key="3">
    <citation type="journal article" date="2007" name="J. Biol. Chem.">
        <title>Three mammalian lipins act as phosphatidate phosphatases with distinct tissue expression patterns.</title>
        <authorList>
            <person name="Donkor J."/>
            <person name="Sariahmetoglu M."/>
            <person name="Dewald J."/>
            <person name="Brindley D.N."/>
            <person name="Reue K."/>
        </authorList>
    </citation>
    <scope>TISSUE SPECIFICITY</scope>
    <scope>CATALYTIC ACTIVITY</scope>
    <scope>COFACTOR</scope>
    <scope>ACTIVITY REGULATION</scope>
    <scope>FUNCTION</scope>
</reference>
<reference key="4">
    <citation type="journal article" date="2007" name="Proc. Natl. Acad. Sci. U.S.A.">
        <title>Large-scale phosphorylation analysis of mouse liver.</title>
        <authorList>
            <person name="Villen J."/>
            <person name="Beausoleil S.A."/>
            <person name="Gerber S.A."/>
            <person name="Gygi S.P."/>
        </authorList>
    </citation>
    <scope>IDENTIFICATION BY MASS SPECTROMETRY [LARGE SCALE ANALYSIS]</scope>
    <source>
        <tissue>Liver</tissue>
    </source>
</reference>
<reference key="5">
    <citation type="journal article" date="2010" name="Cell">
        <title>A tissue-specific atlas of mouse protein phosphorylation and expression.</title>
        <authorList>
            <person name="Huttlin E.L."/>
            <person name="Jedrychowski M.P."/>
            <person name="Elias J.E."/>
            <person name="Goswami T."/>
            <person name="Rad R."/>
            <person name="Beausoleil S.A."/>
            <person name="Villen J."/>
            <person name="Haas W."/>
            <person name="Sowa M.E."/>
            <person name="Gygi S.P."/>
        </authorList>
    </citation>
    <scope>PHOSPHORYLATION [LARGE SCALE ANALYSIS] AT SER-218</scope>
    <scope>IDENTIFICATION BY MASS SPECTROMETRY [LARGE SCALE ANALYSIS]</scope>
    <source>
        <tissue>Kidney</tissue>
        <tissue>Pancreas</tissue>
        <tissue>Testis</tissue>
    </source>
</reference>
<protein>
    <recommendedName>
        <fullName evidence="6">Phosphatidate phosphatase LPIN3</fullName>
        <ecNumber evidence="5">3.1.3.4</ecNumber>
    </recommendedName>
    <alternativeName>
        <fullName>Lipin-3</fullName>
    </alternativeName>
</protein>
<comment type="function">
    <text evidence="5">Magnesium-dependent phosphatidate phosphatase enzyme which catalyzes the conversion of phosphatidic acid to diacylglycerol during triglyceride, phosphatidylcholine and phosphatidylethanolamine biosynthesis therefore regulates fatty acid metabolism.</text>
</comment>
<comment type="catalytic activity">
    <reaction evidence="5">
        <text>a 1,2-diacyl-sn-glycero-3-phosphate + H2O = a 1,2-diacyl-sn-glycerol + phosphate</text>
        <dbReference type="Rhea" id="RHEA:27429"/>
        <dbReference type="ChEBI" id="CHEBI:15377"/>
        <dbReference type="ChEBI" id="CHEBI:17815"/>
        <dbReference type="ChEBI" id="CHEBI:43474"/>
        <dbReference type="ChEBI" id="CHEBI:58608"/>
        <dbReference type="EC" id="3.1.3.4"/>
    </reaction>
    <physiologicalReaction direction="left-to-right" evidence="5">
        <dbReference type="Rhea" id="RHEA:27430"/>
    </physiologicalReaction>
</comment>
<comment type="cofactor">
    <cofactor evidence="5">
        <name>Mg(2+)</name>
        <dbReference type="ChEBI" id="CHEBI:18420"/>
    </cofactor>
</comment>
<comment type="activity regulation">
    <text evidence="5">Inhibited by N-ethylmaleimide.</text>
</comment>
<comment type="subcellular location">
    <subcellularLocation>
        <location evidence="6">Nucleus</location>
    </subcellularLocation>
</comment>
<comment type="tissue specificity">
    <text evidence="5">Significant expression in intestine and other regions of the gastrointestinal tract.</text>
</comment>
<comment type="domain">
    <text evidence="1">Contains 1 Asp-Xaa-Asp-Xaa-Thr (DXDXT) motif, a catalytic motif known to be essential for phosphatidate phosphatase activity.</text>
</comment>
<comment type="domain">
    <text evidence="1">Contains one Leu-Xaa-Xaa-Ile-Leu (LXXIL) motif, a motif known to be a transcriptional binding motif.</text>
</comment>
<comment type="similarity">
    <text evidence="6">Belongs to the lipin family.</text>
</comment>